<sequence length="450" mass="50166">MKKVFVKTYGCQMNEYDSDKMVDVLNASQGLEATDNVEDADVILFNTCSVREKAQEKVFSELGRMKALKAVKPDLVIGVGGCVASQEGASIVSRAPYVDVVFGPQTLHRLPDLIARRQRTGQSQVDISFPEIEKFDHLPPARVEGPSAFVSIMEGCSKYCSYCVVPYTRGEEVSRPFEDVLAEVAGLAEQGVREVTLLGQNVNAYRGKMGDTSEIADFALLIEYVAEIPGIERIRYTTSHPKEFTSRLVELYGRCDKLVNHLHLPVQHASDRILMAMKRGYSVLEYKSIIRRLRALRPDMSMSSDFIVGFPGETDADFDKLMAMIEEIGYDTSFSFIFSPRPGTPAANLHDDTPREVKLQRLQRLQATIEENVQRISQGMVGTVQRILVEGPARKDPTELHGRTENNRVVNFALPGVPQAGRDRLVGQLVDVSITQAFPHSLRGEIVVRQ</sequence>
<protein>
    <recommendedName>
        <fullName evidence="1">tRNA-2-methylthio-N(6)-dimethylallyladenosine synthase</fullName>
        <ecNumber evidence="1">2.8.4.3</ecNumber>
    </recommendedName>
    <alternativeName>
        <fullName evidence="1">(Dimethylallyl)adenosine tRNA methylthiotransferase MiaB</fullName>
    </alternativeName>
    <alternativeName>
        <fullName evidence="1">tRNA-i(6)A37 methylthiotransferase</fullName>
    </alternativeName>
</protein>
<name>MIAB_CUPTR</name>
<evidence type="ECO:0000255" key="1">
    <source>
        <dbReference type="HAMAP-Rule" id="MF_01864"/>
    </source>
</evidence>
<evidence type="ECO:0000255" key="2">
    <source>
        <dbReference type="PROSITE-ProRule" id="PRU01266"/>
    </source>
</evidence>
<dbReference type="EC" id="2.8.4.3" evidence="1"/>
<dbReference type="EMBL" id="CU633749">
    <property type="protein sequence ID" value="CAP63153.1"/>
    <property type="molecule type" value="Genomic_DNA"/>
</dbReference>
<dbReference type="RefSeq" id="WP_012351813.1">
    <property type="nucleotide sequence ID" value="NC_010528.1"/>
</dbReference>
<dbReference type="SMR" id="B2AHA4"/>
<dbReference type="GeneID" id="29760677"/>
<dbReference type="KEGG" id="cti:RALTA_A0485"/>
<dbReference type="eggNOG" id="COG0621">
    <property type="taxonomic scope" value="Bacteria"/>
</dbReference>
<dbReference type="HOGENOM" id="CLU_018697_2_2_4"/>
<dbReference type="BioCyc" id="CTAI977880:RALTA_RS02370-MONOMER"/>
<dbReference type="Proteomes" id="UP000001692">
    <property type="component" value="Chromosome 1"/>
</dbReference>
<dbReference type="GO" id="GO:0005829">
    <property type="term" value="C:cytosol"/>
    <property type="evidence" value="ECO:0007669"/>
    <property type="project" value="TreeGrafter"/>
</dbReference>
<dbReference type="GO" id="GO:0051539">
    <property type="term" value="F:4 iron, 4 sulfur cluster binding"/>
    <property type="evidence" value="ECO:0007669"/>
    <property type="project" value="UniProtKB-UniRule"/>
</dbReference>
<dbReference type="GO" id="GO:0046872">
    <property type="term" value="F:metal ion binding"/>
    <property type="evidence" value="ECO:0007669"/>
    <property type="project" value="UniProtKB-KW"/>
</dbReference>
<dbReference type="GO" id="GO:0035597">
    <property type="term" value="F:N6-isopentenyladenosine methylthiotransferase activity"/>
    <property type="evidence" value="ECO:0007669"/>
    <property type="project" value="TreeGrafter"/>
</dbReference>
<dbReference type="CDD" id="cd01335">
    <property type="entry name" value="Radical_SAM"/>
    <property type="match status" value="1"/>
</dbReference>
<dbReference type="FunFam" id="3.40.50.12160:FF:000001">
    <property type="entry name" value="tRNA-2-methylthio-N(6)-dimethylallyladenosine synthase"/>
    <property type="match status" value="1"/>
</dbReference>
<dbReference type="FunFam" id="3.80.30.20:FF:000001">
    <property type="entry name" value="tRNA-2-methylthio-N(6)-dimethylallyladenosine synthase 2"/>
    <property type="match status" value="1"/>
</dbReference>
<dbReference type="Gene3D" id="3.40.50.12160">
    <property type="entry name" value="Methylthiotransferase, N-terminal domain"/>
    <property type="match status" value="1"/>
</dbReference>
<dbReference type="Gene3D" id="3.80.30.20">
    <property type="entry name" value="tm_1862 like domain"/>
    <property type="match status" value="1"/>
</dbReference>
<dbReference type="HAMAP" id="MF_01864">
    <property type="entry name" value="tRNA_metthiotr_MiaB"/>
    <property type="match status" value="1"/>
</dbReference>
<dbReference type="InterPro" id="IPR006638">
    <property type="entry name" value="Elp3/MiaA/NifB-like_rSAM"/>
</dbReference>
<dbReference type="InterPro" id="IPR005839">
    <property type="entry name" value="Methylthiotransferase"/>
</dbReference>
<dbReference type="InterPro" id="IPR020612">
    <property type="entry name" value="Methylthiotransferase_CS"/>
</dbReference>
<dbReference type="InterPro" id="IPR013848">
    <property type="entry name" value="Methylthiotransferase_N"/>
</dbReference>
<dbReference type="InterPro" id="IPR038135">
    <property type="entry name" value="Methylthiotransferase_N_sf"/>
</dbReference>
<dbReference type="InterPro" id="IPR006463">
    <property type="entry name" value="MiaB_methiolase"/>
</dbReference>
<dbReference type="InterPro" id="IPR007197">
    <property type="entry name" value="rSAM"/>
</dbReference>
<dbReference type="InterPro" id="IPR023404">
    <property type="entry name" value="rSAM_horseshoe"/>
</dbReference>
<dbReference type="InterPro" id="IPR002792">
    <property type="entry name" value="TRAM_dom"/>
</dbReference>
<dbReference type="NCBIfam" id="TIGR01574">
    <property type="entry name" value="miaB-methiolase"/>
    <property type="match status" value="1"/>
</dbReference>
<dbReference type="NCBIfam" id="TIGR00089">
    <property type="entry name" value="MiaB/RimO family radical SAM methylthiotransferase"/>
    <property type="match status" value="1"/>
</dbReference>
<dbReference type="PANTHER" id="PTHR43020">
    <property type="entry name" value="CDK5 REGULATORY SUBUNIT-ASSOCIATED PROTEIN 1"/>
    <property type="match status" value="1"/>
</dbReference>
<dbReference type="PANTHER" id="PTHR43020:SF2">
    <property type="entry name" value="MITOCHONDRIAL TRNA METHYLTHIOTRANSFERASE CDK5RAP1"/>
    <property type="match status" value="1"/>
</dbReference>
<dbReference type="Pfam" id="PF04055">
    <property type="entry name" value="Radical_SAM"/>
    <property type="match status" value="1"/>
</dbReference>
<dbReference type="Pfam" id="PF01938">
    <property type="entry name" value="TRAM"/>
    <property type="match status" value="1"/>
</dbReference>
<dbReference type="Pfam" id="PF00919">
    <property type="entry name" value="UPF0004"/>
    <property type="match status" value="1"/>
</dbReference>
<dbReference type="SFLD" id="SFLDF00273">
    <property type="entry name" value="(dimethylallyl)adenosine_tRNA"/>
    <property type="match status" value="1"/>
</dbReference>
<dbReference type="SFLD" id="SFLDG01082">
    <property type="entry name" value="B12-binding_domain_containing"/>
    <property type="match status" value="1"/>
</dbReference>
<dbReference type="SFLD" id="SFLDG01061">
    <property type="entry name" value="methylthiotransferase"/>
    <property type="match status" value="1"/>
</dbReference>
<dbReference type="SMART" id="SM00729">
    <property type="entry name" value="Elp3"/>
    <property type="match status" value="1"/>
</dbReference>
<dbReference type="SUPFAM" id="SSF102114">
    <property type="entry name" value="Radical SAM enzymes"/>
    <property type="match status" value="1"/>
</dbReference>
<dbReference type="PROSITE" id="PS51449">
    <property type="entry name" value="MTTASE_N"/>
    <property type="match status" value="1"/>
</dbReference>
<dbReference type="PROSITE" id="PS01278">
    <property type="entry name" value="MTTASE_RADICAL"/>
    <property type="match status" value="1"/>
</dbReference>
<dbReference type="PROSITE" id="PS51918">
    <property type="entry name" value="RADICAL_SAM"/>
    <property type="match status" value="1"/>
</dbReference>
<dbReference type="PROSITE" id="PS50926">
    <property type="entry name" value="TRAM"/>
    <property type="match status" value="1"/>
</dbReference>
<feature type="chain" id="PRO_0000374249" description="tRNA-2-methylthio-N(6)-dimethylallyladenosine synthase">
    <location>
        <begin position="1"/>
        <end position="450"/>
    </location>
</feature>
<feature type="domain" description="MTTase N-terminal" evidence="1">
    <location>
        <begin position="2"/>
        <end position="119"/>
    </location>
</feature>
<feature type="domain" description="Radical SAM core" evidence="2">
    <location>
        <begin position="142"/>
        <end position="375"/>
    </location>
</feature>
<feature type="domain" description="TRAM" evidence="1">
    <location>
        <begin position="378"/>
        <end position="448"/>
    </location>
</feature>
<feature type="binding site" evidence="1">
    <location>
        <position position="11"/>
    </location>
    <ligand>
        <name>[4Fe-4S] cluster</name>
        <dbReference type="ChEBI" id="CHEBI:49883"/>
        <label>1</label>
    </ligand>
</feature>
<feature type="binding site" evidence="1">
    <location>
        <position position="48"/>
    </location>
    <ligand>
        <name>[4Fe-4S] cluster</name>
        <dbReference type="ChEBI" id="CHEBI:49883"/>
        <label>1</label>
    </ligand>
</feature>
<feature type="binding site" evidence="1">
    <location>
        <position position="82"/>
    </location>
    <ligand>
        <name>[4Fe-4S] cluster</name>
        <dbReference type="ChEBI" id="CHEBI:49883"/>
        <label>1</label>
    </ligand>
</feature>
<feature type="binding site" evidence="1">
    <location>
        <position position="156"/>
    </location>
    <ligand>
        <name>[4Fe-4S] cluster</name>
        <dbReference type="ChEBI" id="CHEBI:49883"/>
        <label>2</label>
        <note>4Fe-4S-S-AdoMet</note>
    </ligand>
</feature>
<feature type="binding site" evidence="1">
    <location>
        <position position="160"/>
    </location>
    <ligand>
        <name>[4Fe-4S] cluster</name>
        <dbReference type="ChEBI" id="CHEBI:49883"/>
        <label>2</label>
        <note>4Fe-4S-S-AdoMet</note>
    </ligand>
</feature>
<feature type="binding site" evidence="1">
    <location>
        <position position="163"/>
    </location>
    <ligand>
        <name>[4Fe-4S] cluster</name>
        <dbReference type="ChEBI" id="CHEBI:49883"/>
        <label>2</label>
        <note>4Fe-4S-S-AdoMet</note>
    </ligand>
</feature>
<gene>
    <name evidence="1" type="primary">miaB</name>
    <name type="ordered locus">RALTA_A0485</name>
</gene>
<reference key="1">
    <citation type="journal article" date="2008" name="Genome Res.">
        <title>Genome sequence of the beta-rhizobium Cupriavidus taiwanensis and comparative genomics of rhizobia.</title>
        <authorList>
            <person name="Amadou C."/>
            <person name="Pascal G."/>
            <person name="Mangenot S."/>
            <person name="Glew M."/>
            <person name="Bontemps C."/>
            <person name="Capela D."/>
            <person name="Carrere S."/>
            <person name="Cruveiller S."/>
            <person name="Dossat C."/>
            <person name="Lajus A."/>
            <person name="Marchetti M."/>
            <person name="Poinsot V."/>
            <person name="Rouy Z."/>
            <person name="Servin B."/>
            <person name="Saad M."/>
            <person name="Schenowitz C."/>
            <person name="Barbe V."/>
            <person name="Batut J."/>
            <person name="Medigue C."/>
            <person name="Masson-Boivin C."/>
        </authorList>
    </citation>
    <scope>NUCLEOTIDE SEQUENCE [LARGE SCALE GENOMIC DNA]</scope>
    <source>
        <strain>DSM 17343 / BCRC 17206 / CCUG 44338 / CIP 107171 / LMG 19424 / R1</strain>
    </source>
</reference>
<accession>B2AHA4</accession>
<proteinExistence type="inferred from homology"/>
<comment type="function">
    <text evidence="1">Catalyzes the methylthiolation of N6-(dimethylallyl)adenosine (i(6)A), leading to the formation of 2-methylthio-N6-(dimethylallyl)adenosine (ms(2)i(6)A) at position 37 in tRNAs that read codons beginning with uridine.</text>
</comment>
<comment type="catalytic activity">
    <reaction evidence="1">
        <text>N(6)-dimethylallyladenosine(37) in tRNA + (sulfur carrier)-SH + AH2 + 2 S-adenosyl-L-methionine = 2-methylsulfanyl-N(6)-dimethylallyladenosine(37) in tRNA + (sulfur carrier)-H + 5'-deoxyadenosine + L-methionine + A + S-adenosyl-L-homocysteine + 2 H(+)</text>
        <dbReference type="Rhea" id="RHEA:37067"/>
        <dbReference type="Rhea" id="RHEA-COMP:10375"/>
        <dbReference type="Rhea" id="RHEA-COMP:10376"/>
        <dbReference type="Rhea" id="RHEA-COMP:14737"/>
        <dbReference type="Rhea" id="RHEA-COMP:14739"/>
        <dbReference type="ChEBI" id="CHEBI:13193"/>
        <dbReference type="ChEBI" id="CHEBI:15378"/>
        <dbReference type="ChEBI" id="CHEBI:17319"/>
        <dbReference type="ChEBI" id="CHEBI:17499"/>
        <dbReference type="ChEBI" id="CHEBI:29917"/>
        <dbReference type="ChEBI" id="CHEBI:57844"/>
        <dbReference type="ChEBI" id="CHEBI:57856"/>
        <dbReference type="ChEBI" id="CHEBI:59789"/>
        <dbReference type="ChEBI" id="CHEBI:64428"/>
        <dbReference type="ChEBI" id="CHEBI:74415"/>
        <dbReference type="ChEBI" id="CHEBI:74417"/>
        <dbReference type="EC" id="2.8.4.3"/>
    </reaction>
</comment>
<comment type="cofactor">
    <cofactor evidence="1">
        <name>[4Fe-4S] cluster</name>
        <dbReference type="ChEBI" id="CHEBI:49883"/>
    </cofactor>
    <text evidence="1">Binds 2 [4Fe-4S] clusters. One cluster is coordinated with 3 cysteines and an exchangeable S-adenosyl-L-methionine.</text>
</comment>
<comment type="subunit">
    <text evidence="1">Monomer.</text>
</comment>
<comment type="subcellular location">
    <subcellularLocation>
        <location evidence="1">Cytoplasm</location>
    </subcellularLocation>
</comment>
<comment type="similarity">
    <text evidence="1">Belongs to the methylthiotransferase family. MiaB subfamily.</text>
</comment>
<organism>
    <name type="scientific">Cupriavidus taiwanensis (strain DSM 17343 / BCRC 17206 / CCUG 44338 / CIP 107171 / LMG 19424 / R1)</name>
    <name type="common">Ralstonia taiwanensis (strain LMG 19424)</name>
    <dbReference type="NCBI Taxonomy" id="977880"/>
    <lineage>
        <taxon>Bacteria</taxon>
        <taxon>Pseudomonadati</taxon>
        <taxon>Pseudomonadota</taxon>
        <taxon>Betaproteobacteria</taxon>
        <taxon>Burkholderiales</taxon>
        <taxon>Burkholderiaceae</taxon>
        <taxon>Cupriavidus</taxon>
    </lineage>
</organism>
<keyword id="KW-0004">4Fe-4S</keyword>
<keyword id="KW-0963">Cytoplasm</keyword>
<keyword id="KW-0408">Iron</keyword>
<keyword id="KW-0411">Iron-sulfur</keyword>
<keyword id="KW-0479">Metal-binding</keyword>
<keyword id="KW-0949">S-adenosyl-L-methionine</keyword>
<keyword id="KW-0808">Transferase</keyword>
<keyword id="KW-0819">tRNA processing</keyword>